<feature type="chain" id="PRO_0000205056" description="Uncharacterized protein tag-51">
    <location>
        <begin position="1"/>
        <end position="514"/>
    </location>
</feature>
<proteinExistence type="predicted"/>
<organism>
    <name type="scientific">Caenorhabditis elegans</name>
    <dbReference type="NCBI Taxonomy" id="6239"/>
    <lineage>
        <taxon>Eukaryota</taxon>
        <taxon>Metazoa</taxon>
        <taxon>Ecdysozoa</taxon>
        <taxon>Nematoda</taxon>
        <taxon>Chromadorea</taxon>
        <taxon>Rhabditida</taxon>
        <taxon>Rhabditina</taxon>
        <taxon>Rhabditomorpha</taxon>
        <taxon>Rhabditoidea</taxon>
        <taxon>Rhabditidae</taxon>
        <taxon>Peloderinae</taxon>
        <taxon>Caenorhabditis</taxon>
    </lineage>
</organism>
<sequence length="514" mass="59688">MDSAESELLEEEELPEIKYIDSAEFQNFDNNADQREIQFRWMEAFETKEPRWFRLLDEFITPLSGKRGYCSRIVEKYARVLLHQGFELSQTDGPLRVAAIAASRDVGQAGNLPSVLNNLSEVTRHLNLAQYASTSLATVGQRKFANEVVQKTVNQERLGCFHLFLIGYREGLENLLSNHRHLRNFRYSAKKRHDLLTEHIKNIFQERDSFIQAPEASSFALQTVLENWTFPLQNEQIVQLAHANTLQMRALHVKGDGFYFLNEALNVAIAFNWSSSQEEMEEFYSIFTPQATNPRGKRIFQFWKMISKYDRSNGNAQGFLVTAQRLEEESKSDDIGAGCVTAVELACKIRNQCDQHEDLSKTIMDTITRHPSLGPRMMQLAERCGVGYENEEIIHQICDRFSLHPSEPTWLDYVENLVQTVGRFGSVKETMQKSLKIMFEFLDFDSNRFNERAWSLFEKVLSLTDPSFVVPEWRTRFDWWPKYQRLRAKDGRKMSNMATKTRNDVLEALEELVL</sequence>
<name>TAG51_CAEEL</name>
<protein>
    <recommendedName>
        <fullName>Uncharacterized protein tag-51</fullName>
    </recommendedName>
</protein>
<gene>
    <name type="primary">tag-51</name>
    <name type="ORF">K02F3.1</name>
</gene>
<dbReference type="EMBL" id="FO080195">
    <property type="protein sequence ID" value="CCD61870.1"/>
    <property type="molecule type" value="Genomic_DNA"/>
</dbReference>
<dbReference type="RefSeq" id="NP_497277.2">
    <property type="nucleotide sequence ID" value="NM_064876.6"/>
</dbReference>
<dbReference type="SMR" id="P46064"/>
<dbReference type="BioGRID" id="40514">
    <property type="interactions" value="1"/>
</dbReference>
<dbReference type="FunCoup" id="P46064">
    <property type="interactions" value="229"/>
</dbReference>
<dbReference type="IntAct" id="P46064">
    <property type="interactions" value="1"/>
</dbReference>
<dbReference type="MINT" id="P46064"/>
<dbReference type="STRING" id="6239.K02F3.1.1"/>
<dbReference type="PaxDb" id="6239-K02F3.1"/>
<dbReference type="EnsemblMetazoa" id="K02F3.1.1">
    <property type="protein sequence ID" value="K02F3.1.1"/>
    <property type="gene ID" value="WBGene00006430"/>
</dbReference>
<dbReference type="GeneID" id="175245"/>
<dbReference type="KEGG" id="cel:CELE_K02F3.1"/>
<dbReference type="AGR" id="WB:WBGene00006430"/>
<dbReference type="CTD" id="175245"/>
<dbReference type="WormBase" id="K02F3.1">
    <property type="protein sequence ID" value="CE31028"/>
    <property type="gene ID" value="WBGene00006430"/>
    <property type="gene designation" value="tag-51"/>
</dbReference>
<dbReference type="eggNOG" id="ENOG502T1NY">
    <property type="taxonomic scope" value="Eukaryota"/>
</dbReference>
<dbReference type="HOGENOM" id="CLU_530218_0_0_1"/>
<dbReference type="InParanoid" id="P46064"/>
<dbReference type="OMA" id="RFNERAW"/>
<dbReference type="OrthoDB" id="5792247at2759"/>
<dbReference type="Reactome" id="R-CEL-5250924">
    <property type="pathway name" value="B-WICH complex positively regulates rRNA expression"/>
</dbReference>
<dbReference type="Reactome" id="R-CEL-73772">
    <property type="pathway name" value="RNA Polymerase I Promoter Escape"/>
</dbReference>
<dbReference type="PRO" id="PR:P46064"/>
<dbReference type="Proteomes" id="UP000001940">
    <property type="component" value="Chromosome III"/>
</dbReference>
<dbReference type="Bgee" id="WBGene00006430">
    <property type="expression patterns" value="Expressed in germ line (C elegans) and 4 other cell types or tissues"/>
</dbReference>
<dbReference type="InterPro" id="IPR052669">
    <property type="entry name" value="SL1/TIF-IB_Component"/>
</dbReference>
<dbReference type="PANTHER" id="PTHR32122">
    <property type="entry name" value="TATA BOX-BINDING PROTEIN ASSOCIATED FACTOR RNA POLYMERASE I SUBUNIT A"/>
    <property type="match status" value="1"/>
</dbReference>
<dbReference type="PANTHER" id="PTHR32122:SF1">
    <property type="entry name" value="TATA BOX-BINDING PROTEIN-ASSOCIATED FACTOR RNA POLYMERASE I SUBUNIT A"/>
    <property type="match status" value="1"/>
</dbReference>
<keyword id="KW-1185">Reference proteome</keyword>
<reference key="1">
    <citation type="journal article" date="1998" name="Science">
        <title>Genome sequence of the nematode C. elegans: a platform for investigating biology.</title>
        <authorList>
            <consortium name="The C. elegans sequencing consortium"/>
        </authorList>
    </citation>
    <scope>NUCLEOTIDE SEQUENCE [LARGE SCALE GENOMIC DNA]</scope>
    <source>
        <strain>Bristol N2</strain>
    </source>
</reference>
<accession>P46064</accession>